<accession>Q6HKA0</accession>
<name>ILVD_BACHK</name>
<evidence type="ECO:0000255" key="1">
    <source>
        <dbReference type="HAMAP-Rule" id="MF_00012"/>
    </source>
</evidence>
<sequence length="557" mass="60006">MRSDMIKKGFDKAPHRSLLKATGLKDEDFDKPFIAICNSFIEIIPGHKHLNEFGKLVKEAVRAAGMVPFEFNTIGVDDGIAMGHIGMRYSLPSREIIADSVETVVNAHWFDGMICIPNCDKITPGMMMAALRINIPTVFVSGGPMAAGKTSKGDVVDLSSVFEGVGAYQSGKISEEELKDIEDHGCPSCGSCSGMFTANSMNCLCEVLGLALPGNGSILAIDPRREELIKQAAEKLKILIERDIKPRDIVTEEAIDDAFALDMAMGGSTNTVLHTLALAQEAGLDYDMNRIDAVSRRVPHLCKVSPASNWHMEDIDRAGGISAILKEMSRKEGVLHLDRITATGQTLRENIAHAEIKDKEVIHSLENPHSEEGGLRILKGNLAKDGAVIKSGATEVKRFEGPCVIFNSQDEALAGIMLGKVKKGDVVIIRYEGPRGGPGMPEMLAPTSAIAGMGLGADVALLTDGRFSGASRGISVGHISPEAAAGGTIALLEQGDIVCIDVEERLLEVRVSDEELDKRKKEWKRPEPKVKTGWLGRYAQMVTSANTGAVLKIPNFD</sequence>
<protein>
    <recommendedName>
        <fullName evidence="1">Dihydroxy-acid dehydratase</fullName>
        <shortName evidence="1">DAD</shortName>
        <ecNumber evidence="1">4.2.1.9</ecNumber>
    </recommendedName>
</protein>
<gene>
    <name evidence="1" type="primary">ilvD</name>
    <name type="ordered locus">BT9727_1694</name>
</gene>
<proteinExistence type="inferred from homology"/>
<keyword id="KW-0001">2Fe-2S</keyword>
<keyword id="KW-0028">Amino-acid biosynthesis</keyword>
<keyword id="KW-0100">Branched-chain amino acid biosynthesis</keyword>
<keyword id="KW-0408">Iron</keyword>
<keyword id="KW-0411">Iron-sulfur</keyword>
<keyword id="KW-0456">Lyase</keyword>
<keyword id="KW-0460">Magnesium</keyword>
<keyword id="KW-0479">Metal-binding</keyword>
<organism>
    <name type="scientific">Bacillus thuringiensis subsp. konkukian (strain 97-27)</name>
    <dbReference type="NCBI Taxonomy" id="281309"/>
    <lineage>
        <taxon>Bacteria</taxon>
        <taxon>Bacillati</taxon>
        <taxon>Bacillota</taxon>
        <taxon>Bacilli</taxon>
        <taxon>Bacillales</taxon>
        <taxon>Bacillaceae</taxon>
        <taxon>Bacillus</taxon>
        <taxon>Bacillus cereus group</taxon>
    </lineage>
</organism>
<dbReference type="EC" id="4.2.1.9" evidence="1"/>
<dbReference type="EMBL" id="AE017355">
    <property type="protein sequence ID" value="AAT63318.1"/>
    <property type="molecule type" value="Genomic_DNA"/>
</dbReference>
<dbReference type="RefSeq" id="WP_001255797.1">
    <property type="nucleotide sequence ID" value="NC_005957.1"/>
</dbReference>
<dbReference type="RefSeq" id="YP_036026.1">
    <property type="nucleotide sequence ID" value="NC_005957.1"/>
</dbReference>
<dbReference type="SMR" id="Q6HKA0"/>
<dbReference type="KEGG" id="btk:BT9727_1694"/>
<dbReference type="PATRIC" id="fig|281309.8.peg.1784"/>
<dbReference type="HOGENOM" id="CLU_014271_4_2_9"/>
<dbReference type="UniPathway" id="UPA00047">
    <property type="reaction ID" value="UER00057"/>
</dbReference>
<dbReference type="UniPathway" id="UPA00049">
    <property type="reaction ID" value="UER00061"/>
</dbReference>
<dbReference type="Proteomes" id="UP000001301">
    <property type="component" value="Chromosome"/>
</dbReference>
<dbReference type="GO" id="GO:0005829">
    <property type="term" value="C:cytosol"/>
    <property type="evidence" value="ECO:0007669"/>
    <property type="project" value="TreeGrafter"/>
</dbReference>
<dbReference type="GO" id="GO:0051537">
    <property type="term" value="F:2 iron, 2 sulfur cluster binding"/>
    <property type="evidence" value="ECO:0007669"/>
    <property type="project" value="UniProtKB-UniRule"/>
</dbReference>
<dbReference type="GO" id="GO:0004160">
    <property type="term" value="F:dihydroxy-acid dehydratase activity"/>
    <property type="evidence" value="ECO:0007669"/>
    <property type="project" value="UniProtKB-UniRule"/>
</dbReference>
<dbReference type="GO" id="GO:0000287">
    <property type="term" value="F:magnesium ion binding"/>
    <property type="evidence" value="ECO:0007669"/>
    <property type="project" value="UniProtKB-UniRule"/>
</dbReference>
<dbReference type="GO" id="GO:0009097">
    <property type="term" value="P:isoleucine biosynthetic process"/>
    <property type="evidence" value="ECO:0007669"/>
    <property type="project" value="UniProtKB-UniRule"/>
</dbReference>
<dbReference type="GO" id="GO:0009099">
    <property type="term" value="P:L-valine biosynthetic process"/>
    <property type="evidence" value="ECO:0007669"/>
    <property type="project" value="UniProtKB-UniRule"/>
</dbReference>
<dbReference type="FunFam" id="3.50.30.80:FF:000001">
    <property type="entry name" value="Dihydroxy-acid dehydratase"/>
    <property type="match status" value="1"/>
</dbReference>
<dbReference type="Gene3D" id="3.50.30.80">
    <property type="entry name" value="IlvD/EDD C-terminal domain-like"/>
    <property type="match status" value="1"/>
</dbReference>
<dbReference type="HAMAP" id="MF_00012">
    <property type="entry name" value="IlvD"/>
    <property type="match status" value="1"/>
</dbReference>
<dbReference type="InterPro" id="IPR042096">
    <property type="entry name" value="Dihydro-acid_dehy_C"/>
</dbReference>
<dbReference type="InterPro" id="IPR004404">
    <property type="entry name" value="DihydroxyA_deHydtase"/>
</dbReference>
<dbReference type="InterPro" id="IPR020558">
    <property type="entry name" value="DiOHA_6PGluconate_deHydtase_CS"/>
</dbReference>
<dbReference type="InterPro" id="IPR056740">
    <property type="entry name" value="ILV_EDD_C"/>
</dbReference>
<dbReference type="InterPro" id="IPR000581">
    <property type="entry name" value="ILV_EDD_N"/>
</dbReference>
<dbReference type="InterPro" id="IPR037237">
    <property type="entry name" value="IlvD/EDD_N"/>
</dbReference>
<dbReference type="NCBIfam" id="TIGR00110">
    <property type="entry name" value="ilvD"/>
    <property type="match status" value="1"/>
</dbReference>
<dbReference type="NCBIfam" id="NF002068">
    <property type="entry name" value="PRK00911.1"/>
    <property type="match status" value="1"/>
</dbReference>
<dbReference type="PANTHER" id="PTHR43661">
    <property type="entry name" value="D-XYLONATE DEHYDRATASE"/>
    <property type="match status" value="1"/>
</dbReference>
<dbReference type="PANTHER" id="PTHR43661:SF3">
    <property type="entry name" value="D-XYLONATE DEHYDRATASE YAGF-RELATED"/>
    <property type="match status" value="1"/>
</dbReference>
<dbReference type="Pfam" id="PF24877">
    <property type="entry name" value="ILV_EDD_C"/>
    <property type="match status" value="1"/>
</dbReference>
<dbReference type="Pfam" id="PF00920">
    <property type="entry name" value="ILVD_EDD_N"/>
    <property type="match status" value="1"/>
</dbReference>
<dbReference type="SUPFAM" id="SSF143975">
    <property type="entry name" value="IlvD/EDD N-terminal domain-like"/>
    <property type="match status" value="1"/>
</dbReference>
<dbReference type="SUPFAM" id="SSF52016">
    <property type="entry name" value="LeuD/IlvD-like"/>
    <property type="match status" value="1"/>
</dbReference>
<dbReference type="PROSITE" id="PS00886">
    <property type="entry name" value="ILVD_EDD_1"/>
    <property type="match status" value="1"/>
</dbReference>
<dbReference type="PROSITE" id="PS00887">
    <property type="entry name" value="ILVD_EDD_2"/>
    <property type="match status" value="1"/>
</dbReference>
<comment type="function">
    <text evidence="1">Functions in the biosynthesis of branched-chain amino acids. Catalyzes the dehydration of (2R,3R)-2,3-dihydroxy-3-methylpentanoate (2,3-dihydroxy-3-methylvalerate) into 2-oxo-3-methylpentanoate (2-oxo-3-methylvalerate) and of (2R)-2,3-dihydroxy-3-methylbutanoate (2,3-dihydroxyisovalerate) into 2-oxo-3-methylbutanoate (2-oxoisovalerate), the penultimate precursor to L-isoleucine and L-valine, respectively.</text>
</comment>
<comment type="catalytic activity">
    <reaction evidence="1">
        <text>(2R)-2,3-dihydroxy-3-methylbutanoate = 3-methyl-2-oxobutanoate + H2O</text>
        <dbReference type="Rhea" id="RHEA:24809"/>
        <dbReference type="ChEBI" id="CHEBI:11851"/>
        <dbReference type="ChEBI" id="CHEBI:15377"/>
        <dbReference type="ChEBI" id="CHEBI:49072"/>
        <dbReference type="EC" id="4.2.1.9"/>
    </reaction>
    <physiologicalReaction direction="left-to-right" evidence="1">
        <dbReference type="Rhea" id="RHEA:24810"/>
    </physiologicalReaction>
</comment>
<comment type="catalytic activity">
    <reaction evidence="1">
        <text>(2R,3R)-2,3-dihydroxy-3-methylpentanoate = (S)-3-methyl-2-oxopentanoate + H2O</text>
        <dbReference type="Rhea" id="RHEA:27694"/>
        <dbReference type="ChEBI" id="CHEBI:15377"/>
        <dbReference type="ChEBI" id="CHEBI:35146"/>
        <dbReference type="ChEBI" id="CHEBI:49258"/>
        <dbReference type="EC" id="4.2.1.9"/>
    </reaction>
    <physiologicalReaction direction="left-to-right" evidence="1">
        <dbReference type="Rhea" id="RHEA:27695"/>
    </physiologicalReaction>
</comment>
<comment type="cofactor">
    <cofactor evidence="1">
        <name>[2Fe-2S] cluster</name>
        <dbReference type="ChEBI" id="CHEBI:190135"/>
    </cofactor>
    <text evidence="1">Binds 1 [2Fe-2S] cluster per subunit. This cluster acts as a Lewis acid cofactor.</text>
</comment>
<comment type="cofactor">
    <cofactor evidence="1">
        <name>Mg(2+)</name>
        <dbReference type="ChEBI" id="CHEBI:18420"/>
    </cofactor>
</comment>
<comment type="pathway">
    <text evidence="1">Amino-acid biosynthesis; L-isoleucine biosynthesis; L-isoleucine from 2-oxobutanoate: step 3/4.</text>
</comment>
<comment type="pathway">
    <text evidence="1">Amino-acid biosynthesis; L-valine biosynthesis; L-valine from pyruvate: step 3/4.</text>
</comment>
<comment type="subunit">
    <text evidence="1">Homodimer.</text>
</comment>
<comment type="similarity">
    <text evidence="1">Belongs to the IlvD/Edd family.</text>
</comment>
<feature type="chain" id="PRO_0000225370" description="Dihydroxy-acid dehydratase">
    <location>
        <begin position="1"/>
        <end position="557"/>
    </location>
</feature>
<feature type="active site" description="Proton acceptor" evidence="1">
    <location>
        <position position="468"/>
    </location>
</feature>
<feature type="binding site" evidence="1">
    <location>
        <position position="78"/>
    </location>
    <ligand>
        <name>Mg(2+)</name>
        <dbReference type="ChEBI" id="CHEBI:18420"/>
    </ligand>
</feature>
<feature type="binding site" evidence="1">
    <location>
        <position position="119"/>
    </location>
    <ligand>
        <name>[2Fe-2S] cluster</name>
        <dbReference type="ChEBI" id="CHEBI:190135"/>
    </ligand>
</feature>
<feature type="binding site" evidence="1">
    <location>
        <position position="120"/>
    </location>
    <ligand>
        <name>Mg(2+)</name>
        <dbReference type="ChEBI" id="CHEBI:18420"/>
    </ligand>
</feature>
<feature type="binding site" description="via carbamate group" evidence="1">
    <location>
        <position position="121"/>
    </location>
    <ligand>
        <name>Mg(2+)</name>
        <dbReference type="ChEBI" id="CHEBI:18420"/>
    </ligand>
</feature>
<feature type="binding site" evidence="1">
    <location>
        <position position="192"/>
    </location>
    <ligand>
        <name>[2Fe-2S] cluster</name>
        <dbReference type="ChEBI" id="CHEBI:190135"/>
    </ligand>
</feature>
<feature type="binding site" evidence="1">
    <location>
        <position position="442"/>
    </location>
    <ligand>
        <name>Mg(2+)</name>
        <dbReference type="ChEBI" id="CHEBI:18420"/>
    </ligand>
</feature>
<feature type="modified residue" description="N6-carboxylysine" evidence="1">
    <location>
        <position position="121"/>
    </location>
</feature>
<reference key="1">
    <citation type="journal article" date="2006" name="J. Bacteriol.">
        <title>Pathogenomic sequence analysis of Bacillus cereus and Bacillus thuringiensis isolates closely related to Bacillus anthracis.</title>
        <authorList>
            <person name="Han C.S."/>
            <person name="Xie G."/>
            <person name="Challacombe J.F."/>
            <person name="Altherr M.R."/>
            <person name="Bhotika S.S."/>
            <person name="Bruce D."/>
            <person name="Campbell C.S."/>
            <person name="Campbell M.L."/>
            <person name="Chen J."/>
            <person name="Chertkov O."/>
            <person name="Cleland C."/>
            <person name="Dimitrijevic M."/>
            <person name="Doggett N.A."/>
            <person name="Fawcett J.J."/>
            <person name="Glavina T."/>
            <person name="Goodwin L.A."/>
            <person name="Hill K.K."/>
            <person name="Hitchcock P."/>
            <person name="Jackson P.J."/>
            <person name="Keim P."/>
            <person name="Kewalramani A.R."/>
            <person name="Longmire J."/>
            <person name="Lucas S."/>
            <person name="Malfatti S."/>
            <person name="McMurry K."/>
            <person name="Meincke L.J."/>
            <person name="Misra M."/>
            <person name="Moseman B.L."/>
            <person name="Mundt M."/>
            <person name="Munk A.C."/>
            <person name="Okinaka R.T."/>
            <person name="Parson-Quintana B."/>
            <person name="Reilly L.P."/>
            <person name="Richardson P."/>
            <person name="Robinson D.L."/>
            <person name="Rubin E."/>
            <person name="Saunders E."/>
            <person name="Tapia R."/>
            <person name="Tesmer J.G."/>
            <person name="Thayer N."/>
            <person name="Thompson L.S."/>
            <person name="Tice H."/>
            <person name="Ticknor L.O."/>
            <person name="Wills P.L."/>
            <person name="Brettin T.S."/>
            <person name="Gilna P."/>
        </authorList>
    </citation>
    <scope>NUCLEOTIDE SEQUENCE [LARGE SCALE GENOMIC DNA]</scope>
    <source>
        <strain>97-27</strain>
    </source>
</reference>